<name>MDH_ACIBT</name>
<organism>
    <name type="scientific">Acinetobacter baumannii (strain ATCC 17978 / DSM 105126 / CIP 53.77 / LMG 1025 / NCDC KC755 / 5377)</name>
    <dbReference type="NCBI Taxonomy" id="400667"/>
    <lineage>
        <taxon>Bacteria</taxon>
        <taxon>Pseudomonadati</taxon>
        <taxon>Pseudomonadota</taxon>
        <taxon>Gammaproteobacteria</taxon>
        <taxon>Moraxellales</taxon>
        <taxon>Moraxellaceae</taxon>
        <taxon>Acinetobacter</taxon>
        <taxon>Acinetobacter calcoaceticus/baumannii complex</taxon>
    </lineage>
</organism>
<evidence type="ECO:0000255" key="1">
    <source>
        <dbReference type="HAMAP-Rule" id="MF_01517"/>
    </source>
</evidence>
<protein>
    <recommendedName>
        <fullName evidence="1">Malate dehydrogenase</fullName>
        <ecNumber evidence="1">1.1.1.37</ecNumber>
    </recommendedName>
</protein>
<dbReference type="EC" id="1.1.1.37" evidence="1"/>
<dbReference type="EMBL" id="CP000521">
    <property type="protein sequence ID" value="ABO13422.2"/>
    <property type="molecule type" value="Genomic_DNA"/>
</dbReference>
<dbReference type="RefSeq" id="WP_000813006.1">
    <property type="nucleotide sequence ID" value="NZ_CP053098.1"/>
</dbReference>
<dbReference type="SMR" id="A3M928"/>
<dbReference type="KEGG" id="acb:A1S_3025"/>
<dbReference type="HOGENOM" id="CLU_040727_2_0_6"/>
<dbReference type="GO" id="GO:0030060">
    <property type="term" value="F:L-malate dehydrogenase (NAD+) activity"/>
    <property type="evidence" value="ECO:0007669"/>
    <property type="project" value="UniProtKB-UniRule"/>
</dbReference>
<dbReference type="GO" id="GO:0006108">
    <property type="term" value="P:malate metabolic process"/>
    <property type="evidence" value="ECO:0007669"/>
    <property type="project" value="InterPro"/>
</dbReference>
<dbReference type="GO" id="GO:0006099">
    <property type="term" value="P:tricarboxylic acid cycle"/>
    <property type="evidence" value="ECO:0007669"/>
    <property type="project" value="UniProtKB-UniRule"/>
</dbReference>
<dbReference type="CDD" id="cd01338">
    <property type="entry name" value="MDH_chloroplast-like"/>
    <property type="match status" value="1"/>
</dbReference>
<dbReference type="FunFam" id="3.40.50.720:FF:000010">
    <property type="entry name" value="Malate dehydrogenase"/>
    <property type="match status" value="1"/>
</dbReference>
<dbReference type="FunFam" id="3.90.110.10:FF:000002">
    <property type="entry name" value="Malate dehydrogenase"/>
    <property type="match status" value="1"/>
</dbReference>
<dbReference type="Gene3D" id="3.90.110.10">
    <property type="entry name" value="Lactate dehydrogenase/glycoside hydrolase, family 4, C-terminal"/>
    <property type="match status" value="1"/>
</dbReference>
<dbReference type="Gene3D" id="3.40.50.720">
    <property type="entry name" value="NAD(P)-binding Rossmann-like Domain"/>
    <property type="match status" value="1"/>
</dbReference>
<dbReference type="HAMAP" id="MF_01517">
    <property type="entry name" value="Malate_dehydrog_2"/>
    <property type="match status" value="1"/>
</dbReference>
<dbReference type="InterPro" id="IPR001557">
    <property type="entry name" value="L-lactate/malate_DH"/>
</dbReference>
<dbReference type="InterPro" id="IPR022383">
    <property type="entry name" value="Lactate/malate_DH_C"/>
</dbReference>
<dbReference type="InterPro" id="IPR001236">
    <property type="entry name" value="Lactate/malate_DH_N"/>
</dbReference>
<dbReference type="InterPro" id="IPR015955">
    <property type="entry name" value="Lactate_DH/Glyco_Ohase_4_C"/>
</dbReference>
<dbReference type="InterPro" id="IPR010945">
    <property type="entry name" value="Malate_DH_type2"/>
</dbReference>
<dbReference type="InterPro" id="IPR036291">
    <property type="entry name" value="NAD(P)-bd_dom_sf"/>
</dbReference>
<dbReference type="NCBIfam" id="TIGR01759">
    <property type="entry name" value="MalateDH-SF1"/>
    <property type="match status" value="1"/>
</dbReference>
<dbReference type="NCBIfam" id="NF003916">
    <property type="entry name" value="PRK05442.1"/>
    <property type="match status" value="1"/>
</dbReference>
<dbReference type="PANTHER" id="PTHR23382">
    <property type="entry name" value="MALATE DEHYDROGENASE"/>
    <property type="match status" value="1"/>
</dbReference>
<dbReference type="Pfam" id="PF02866">
    <property type="entry name" value="Ldh_1_C"/>
    <property type="match status" value="1"/>
</dbReference>
<dbReference type="Pfam" id="PF00056">
    <property type="entry name" value="Ldh_1_N"/>
    <property type="match status" value="1"/>
</dbReference>
<dbReference type="PIRSF" id="PIRSF000102">
    <property type="entry name" value="Lac_mal_DH"/>
    <property type="match status" value="1"/>
</dbReference>
<dbReference type="SUPFAM" id="SSF56327">
    <property type="entry name" value="LDH C-terminal domain-like"/>
    <property type="match status" value="1"/>
</dbReference>
<dbReference type="SUPFAM" id="SSF51735">
    <property type="entry name" value="NAD(P)-binding Rossmann-fold domains"/>
    <property type="match status" value="1"/>
</dbReference>
<feature type="chain" id="PRO_0000294371" description="Malate dehydrogenase">
    <location>
        <begin position="1"/>
        <end position="328"/>
    </location>
</feature>
<feature type="active site" description="Proton acceptor" evidence="1">
    <location>
        <position position="189"/>
    </location>
</feature>
<feature type="binding site" evidence="1">
    <location>
        <begin position="11"/>
        <end position="17"/>
    </location>
    <ligand>
        <name>NAD(+)</name>
        <dbReference type="ChEBI" id="CHEBI:57540"/>
    </ligand>
</feature>
<feature type="binding site" evidence="1">
    <location>
        <position position="94"/>
    </location>
    <ligand>
        <name>substrate</name>
    </ligand>
</feature>
<feature type="binding site" evidence="1">
    <location>
        <position position="100"/>
    </location>
    <ligand>
        <name>substrate</name>
    </ligand>
</feature>
<feature type="binding site" evidence="1">
    <location>
        <position position="107"/>
    </location>
    <ligand>
        <name>NAD(+)</name>
        <dbReference type="ChEBI" id="CHEBI:57540"/>
    </ligand>
</feature>
<feature type="binding site" evidence="1">
    <location>
        <position position="114"/>
    </location>
    <ligand>
        <name>NAD(+)</name>
        <dbReference type="ChEBI" id="CHEBI:57540"/>
    </ligand>
</feature>
<feature type="binding site" evidence="1">
    <location>
        <begin position="131"/>
        <end position="133"/>
    </location>
    <ligand>
        <name>NAD(+)</name>
        <dbReference type="ChEBI" id="CHEBI:57540"/>
    </ligand>
</feature>
<feature type="binding site" evidence="1">
    <location>
        <position position="133"/>
    </location>
    <ligand>
        <name>substrate</name>
    </ligand>
</feature>
<feature type="binding site" evidence="1">
    <location>
        <position position="164"/>
    </location>
    <ligand>
        <name>substrate</name>
    </ligand>
</feature>
<sequence length="328" mass="35323">MKQPVRVAVTGAAGQIGYSLLFRIASGEMLGKDQPVILQLLEVPVEKAQQALKGVMMELDDCAFPLLAGMIGTDDPKVAFKDADYALLVGSRPRGPGMERADLLKVNGEIFIGQGQALNEVASRDVKVLVVGNPANTNAYIAMKSAPDLPAKNFTAMLRLDHNRALTQVAQKAGVAVADIEKLTVWGNHSPTMYADYRFATANGESLKDKINDPAWNKDVFLPTVGKRGAAIIEARGLSSAASAANAAIDHMRDWALGTNGKWVTMGVPSDGSYGIPEGVMFGFPVTTENGEYKIVQGLEIDEFSRERINFTLNELEEERAAIADMVK</sequence>
<reference key="1">
    <citation type="journal article" date="2007" name="Genes Dev.">
        <title>New insights into Acinetobacter baumannii pathogenesis revealed by high-density pyrosequencing and transposon mutagenesis.</title>
        <authorList>
            <person name="Smith M.G."/>
            <person name="Gianoulis T.A."/>
            <person name="Pukatzki S."/>
            <person name="Mekalanos J.J."/>
            <person name="Ornston L.N."/>
            <person name="Gerstein M."/>
            <person name="Snyder M."/>
        </authorList>
    </citation>
    <scope>NUCLEOTIDE SEQUENCE [LARGE SCALE GENOMIC DNA]</scope>
    <source>
        <strain>ATCC 17978 / DSM 105126 / CIP 53.77 / LMG 1025 / NCDC KC755 / 5377</strain>
    </source>
</reference>
<comment type="function">
    <text evidence="1">Catalyzes the reversible oxidation of malate to oxaloacetate.</text>
</comment>
<comment type="catalytic activity">
    <reaction evidence="1">
        <text>(S)-malate + NAD(+) = oxaloacetate + NADH + H(+)</text>
        <dbReference type="Rhea" id="RHEA:21432"/>
        <dbReference type="ChEBI" id="CHEBI:15378"/>
        <dbReference type="ChEBI" id="CHEBI:15589"/>
        <dbReference type="ChEBI" id="CHEBI:16452"/>
        <dbReference type="ChEBI" id="CHEBI:57540"/>
        <dbReference type="ChEBI" id="CHEBI:57945"/>
        <dbReference type="EC" id="1.1.1.37"/>
    </reaction>
</comment>
<comment type="similarity">
    <text evidence="1">Belongs to the LDH/MDH superfamily. MDH type 2 family.</text>
</comment>
<proteinExistence type="inferred from homology"/>
<keyword id="KW-0520">NAD</keyword>
<keyword id="KW-0560">Oxidoreductase</keyword>
<keyword id="KW-0816">Tricarboxylic acid cycle</keyword>
<gene>
    <name evidence="1" type="primary">mdh</name>
    <name type="ordered locus">A1S_3025</name>
</gene>
<accession>A3M928</accession>